<evidence type="ECO:0000255" key="1">
    <source>
        <dbReference type="HAMAP-Rule" id="MF_00380"/>
    </source>
</evidence>
<proteinExistence type="inferred from homology"/>
<feature type="chain" id="PRO_1000122157" description="Integration host factor subunit alpha">
    <location>
        <begin position="1"/>
        <end position="112"/>
    </location>
</feature>
<organism>
    <name type="scientific">Rhizobium leguminosarum bv. trifolii (strain WSM2304)</name>
    <dbReference type="NCBI Taxonomy" id="395492"/>
    <lineage>
        <taxon>Bacteria</taxon>
        <taxon>Pseudomonadati</taxon>
        <taxon>Pseudomonadota</taxon>
        <taxon>Alphaproteobacteria</taxon>
        <taxon>Hyphomicrobiales</taxon>
        <taxon>Rhizobiaceae</taxon>
        <taxon>Rhizobium/Agrobacterium group</taxon>
        <taxon>Rhizobium</taxon>
    </lineage>
</organism>
<gene>
    <name evidence="1" type="primary">ihfA</name>
    <name evidence="1" type="synonym">himA</name>
    <name type="ordered locus">Rleg2_1198</name>
</gene>
<sequence>MTGKTVTRADLAESVFRKVGLSRTESAELVETVIDEVCNAIVRGETVKLSSFATFQVRDKNERIGRNPKTGEEVPISPRRVMTFKASNVLKTRILKAHVARKVKLKPQNPAS</sequence>
<protein>
    <recommendedName>
        <fullName evidence="1">Integration host factor subunit alpha</fullName>
        <shortName evidence="1">IHF-alpha</shortName>
    </recommendedName>
</protein>
<comment type="function">
    <text evidence="1">This protein is one of the two subunits of integration host factor, a specific DNA-binding protein that functions in genetic recombination as well as in transcriptional and translational control.</text>
</comment>
<comment type="subunit">
    <text evidence="1">Heterodimer of an alpha and a beta chain.</text>
</comment>
<comment type="similarity">
    <text evidence="1">Belongs to the bacterial histone-like protein family.</text>
</comment>
<accession>B5ZXV9</accession>
<name>IHFA_RHILW</name>
<dbReference type="EMBL" id="CP001191">
    <property type="protein sequence ID" value="ACI54492.1"/>
    <property type="molecule type" value="Genomic_DNA"/>
</dbReference>
<dbReference type="RefSeq" id="WP_003578475.1">
    <property type="nucleotide sequence ID" value="NC_011369.1"/>
</dbReference>
<dbReference type="SMR" id="B5ZXV9"/>
<dbReference type="STRING" id="395492.Rleg2_1198"/>
<dbReference type="KEGG" id="rlt:Rleg2_1198"/>
<dbReference type="eggNOG" id="COG0776">
    <property type="taxonomic scope" value="Bacteria"/>
</dbReference>
<dbReference type="HOGENOM" id="CLU_105066_1_1_5"/>
<dbReference type="Proteomes" id="UP000008330">
    <property type="component" value="Chromosome"/>
</dbReference>
<dbReference type="GO" id="GO:0005829">
    <property type="term" value="C:cytosol"/>
    <property type="evidence" value="ECO:0007669"/>
    <property type="project" value="TreeGrafter"/>
</dbReference>
<dbReference type="GO" id="GO:0003677">
    <property type="term" value="F:DNA binding"/>
    <property type="evidence" value="ECO:0007669"/>
    <property type="project" value="UniProtKB-UniRule"/>
</dbReference>
<dbReference type="GO" id="GO:0030527">
    <property type="term" value="F:structural constituent of chromatin"/>
    <property type="evidence" value="ECO:0007669"/>
    <property type="project" value="InterPro"/>
</dbReference>
<dbReference type="GO" id="GO:0006310">
    <property type="term" value="P:DNA recombination"/>
    <property type="evidence" value="ECO:0007669"/>
    <property type="project" value="UniProtKB-UniRule"/>
</dbReference>
<dbReference type="GO" id="GO:0009893">
    <property type="term" value="P:positive regulation of metabolic process"/>
    <property type="evidence" value="ECO:0007669"/>
    <property type="project" value="UniProtKB-ARBA"/>
</dbReference>
<dbReference type="GO" id="GO:0006355">
    <property type="term" value="P:regulation of DNA-templated transcription"/>
    <property type="evidence" value="ECO:0007669"/>
    <property type="project" value="UniProtKB-UniRule"/>
</dbReference>
<dbReference type="GO" id="GO:0006417">
    <property type="term" value="P:regulation of translation"/>
    <property type="evidence" value="ECO:0007669"/>
    <property type="project" value="UniProtKB-UniRule"/>
</dbReference>
<dbReference type="CDD" id="cd13835">
    <property type="entry name" value="IHF_A"/>
    <property type="match status" value="1"/>
</dbReference>
<dbReference type="Gene3D" id="4.10.520.10">
    <property type="entry name" value="IHF-like DNA-binding proteins"/>
    <property type="match status" value="1"/>
</dbReference>
<dbReference type="HAMAP" id="MF_00380">
    <property type="entry name" value="IHF_alpha"/>
    <property type="match status" value="1"/>
</dbReference>
<dbReference type="InterPro" id="IPR000119">
    <property type="entry name" value="Hist_DNA-bd"/>
</dbReference>
<dbReference type="InterPro" id="IPR020816">
    <property type="entry name" value="Histone-like_DNA-bd_CS"/>
</dbReference>
<dbReference type="InterPro" id="IPR010992">
    <property type="entry name" value="IHF-like_DNA-bd_dom_sf"/>
</dbReference>
<dbReference type="InterPro" id="IPR005684">
    <property type="entry name" value="IHF_alpha"/>
</dbReference>
<dbReference type="NCBIfam" id="TIGR00987">
    <property type="entry name" value="himA"/>
    <property type="match status" value="1"/>
</dbReference>
<dbReference type="NCBIfam" id="NF001401">
    <property type="entry name" value="PRK00285.1"/>
    <property type="match status" value="1"/>
</dbReference>
<dbReference type="PANTHER" id="PTHR33175">
    <property type="entry name" value="DNA-BINDING PROTEIN HU"/>
    <property type="match status" value="1"/>
</dbReference>
<dbReference type="PANTHER" id="PTHR33175:SF2">
    <property type="entry name" value="INTEGRATION HOST FACTOR SUBUNIT ALPHA"/>
    <property type="match status" value="1"/>
</dbReference>
<dbReference type="Pfam" id="PF00216">
    <property type="entry name" value="Bac_DNA_binding"/>
    <property type="match status" value="1"/>
</dbReference>
<dbReference type="PRINTS" id="PR01727">
    <property type="entry name" value="DNABINDINGHU"/>
</dbReference>
<dbReference type="SMART" id="SM00411">
    <property type="entry name" value="BHL"/>
    <property type="match status" value="1"/>
</dbReference>
<dbReference type="SUPFAM" id="SSF47729">
    <property type="entry name" value="IHF-like DNA-binding proteins"/>
    <property type="match status" value="1"/>
</dbReference>
<dbReference type="PROSITE" id="PS00045">
    <property type="entry name" value="HISTONE_LIKE"/>
    <property type="match status" value="1"/>
</dbReference>
<keyword id="KW-0233">DNA recombination</keyword>
<keyword id="KW-0238">DNA-binding</keyword>
<keyword id="KW-1185">Reference proteome</keyword>
<keyword id="KW-0804">Transcription</keyword>
<keyword id="KW-0805">Transcription regulation</keyword>
<keyword id="KW-0810">Translation regulation</keyword>
<reference key="1">
    <citation type="journal article" date="2010" name="Stand. Genomic Sci.">
        <title>Complete genome sequence of Rhizobium leguminosarum bv trifolii strain WSM2304, an effective microsymbiont of the South American clover Trifolium polymorphum.</title>
        <authorList>
            <person name="Reeve W."/>
            <person name="O'Hara G."/>
            <person name="Chain P."/>
            <person name="Ardley J."/>
            <person name="Brau L."/>
            <person name="Nandesena K."/>
            <person name="Tiwari R."/>
            <person name="Malfatti S."/>
            <person name="Kiss H."/>
            <person name="Lapidus A."/>
            <person name="Copeland A."/>
            <person name="Nolan M."/>
            <person name="Land M."/>
            <person name="Ivanova N."/>
            <person name="Mavromatis K."/>
            <person name="Markowitz V."/>
            <person name="Kyrpides N."/>
            <person name="Melino V."/>
            <person name="Denton M."/>
            <person name="Yates R."/>
            <person name="Howieson J."/>
        </authorList>
    </citation>
    <scope>NUCLEOTIDE SEQUENCE [LARGE SCALE GENOMIC DNA]</scope>
    <source>
        <strain>WSM2304</strain>
    </source>
</reference>